<protein>
    <recommendedName>
        <fullName>Aldo-keto reductase family 1 member D1</fullName>
        <ecNumber evidence="1">1.3.1.3</ecNumber>
    </recommendedName>
    <alternativeName>
        <fullName>3-oxo-5-beta-steroid 4-dehydrogenase</fullName>
    </alternativeName>
    <alternativeName>
        <fullName>Delta(4)-3-ketosteroid 5-beta-reductase</fullName>
    </alternativeName>
    <alternativeName>
        <fullName>Delta(4)-3-oxosteroid 5-beta-reductase</fullName>
    </alternativeName>
</protein>
<dbReference type="EC" id="1.3.1.3" evidence="1"/>
<dbReference type="EMBL" id="D17309">
    <property type="protein sequence ID" value="BAA04131.1"/>
    <property type="molecule type" value="mRNA"/>
</dbReference>
<dbReference type="EMBL" id="S80431">
    <property type="protein sequence ID" value="AAB35916.2"/>
    <property type="molecule type" value="mRNA"/>
</dbReference>
<dbReference type="PIR" id="S15835">
    <property type="entry name" value="S15835"/>
</dbReference>
<dbReference type="RefSeq" id="NP_620239.1">
    <property type="nucleotide sequence ID" value="NM_138884.1"/>
</dbReference>
<dbReference type="SMR" id="P31210"/>
<dbReference type="FunCoup" id="P31210">
    <property type="interactions" value="76"/>
</dbReference>
<dbReference type="STRING" id="10116.ENSRNOP00000017675"/>
<dbReference type="ChEMBL" id="CHEMBL5760"/>
<dbReference type="iPTMnet" id="P31210"/>
<dbReference type="PhosphoSitePlus" id="P31210"/>
<dbReference type="PaxDb" id="10116-ENSRNOP00000017675"/>
<dbReference type="GeneID" id="192242"/>
<dbReference type="KEGG" id="rno:192242"/>
<dbReference type="UCSC" id="RGD:620752">
    <property type="organism name" value="rat"/>
</dbReference>
<dbReference type="AGR" id="RGD:620752"/>
<dbReference type="CTD" id="6718"/>
<dbReference type="RGD" id="620752">
    <property type="gene designation" value="Akr1d1"/>
</dbReference>
<dbReference type="eggNOG" id="KOG1577">
    <property type="taxonomic scope" value="Eukaryota"/>
</dbReference>
<dbReference type="InParanoid" id="P31210"/>
<dbReference type="PhylomeDB" id="P31210"/>
<dbReference type="BioCyc" id="MetaCyc:MONOMER-14304"/>
<dbReference type="Reactome" id="R-RNO-193368">
    <property type="pathway name" value="Synthesis of bile acids and bile salts via 7alpha-hydroxycholesterol"/>
</dbReference>
<dbReference type="Reactome" id="R-RNO-193775">
    <property type="pathway name" value="Synthesis of bile acids and bile salts via 24-hydroxycholesterol"/>
</dbReference>
<dbReference type="Reactome" id="R-RNO-193807">
    <property type="pathway name" value="Synthesis of bile acids and bile salts via 27-hydroxycholesterol"/>
</dbReference>
<dbReference type="SABIO-RK" id="P31210"/>
<dbReference type="PRO" id="PR:P31210"/>
<dbReference type="Proteomes" id="UP000002494">
    <property type="component" value="Unplaced"/>
</dbReference>
<dbReference type="GO" id="GO:0005829">
    <property type="term" value="C:cytosol"/>
    <property type="evidence" value="ECO:0000266"/>
    <property type="project" value="RGD"/>
</dbReference>
<dbReference type="GO" id="GO:0047568">
    <property type="term" value="F:3-oxo-5-beta-steroid 4-dehydrogenase activity"/>
    <property type="evidence" value="ECO:0000314"/>
    <property type="project" value="MGI"/>
</dbReference>
<dbReference type="GO" id="GO:0004032">
    <property type="term" value="F:aldose reductase (NADPH) activity"/>
    <property type="evidence" value="ECO:0000318"/>
    <property type="project" value="GO_Central"/>
</dbReference>
<dbReference type="GO" id="GO:0047787">
    <property type="term" value="F:Delta4-3-oxosteroid 5beta-reductase activity"/>
    <property type="evidence" value="ECO:0007669"/>
    <property type="project" value="UniProtKB-EC"/>
</dbReference>
<dbReference type="GO" id="GO:0047086">
    <property type="term" value="F:ketosteroid monooxygenase activity"/>
    <property type="evidence" value="ECO:0000318"/>
    <property type="project" value="GO_Central"/>
</dbReference>
<dbReference type="GO" id="GO:0016229">
    <property type="term" value="F:steroid dehydrogenase activity"/>
    <property type="evidence" value="ECO:0000318"/>
    <property type="project" value="GO_Central"/>
</dbReference>
<dbReference type="GO" id="GO:0008209">
    <property type="term" value="P:androgen metabolic process"/>
    <property type="evidence" value="ECO:0000266"/>
    <property type="project" value="RGD"/>
</dbReference>
<dbReference type="GO" id="GO:0006699">
    <property type="term" value="P:bile acid biosynthetic process"/>
    <property type="evidence" value="ECO:0000266"/>
    <property type="project" value="RGD"/>
</dbReference>
<dbReference type="GO" id="GO:0030573">
    <property type="term" value="P:bile acid catabolic process"/>
    <property type="evidence" value="ECO:0007669"/>
    <property type="project" value="UniProtKB-KW"/>
</dbReference>
<dbReference type="GO" id="GO:0008207">
    <property type="term" value="P:C21-steroid hormone metabolic process"/>
    <property type="evidence" value="ECO:0000266"/>
    <property type="project" value="RGD"/>
</dbReference>
<dbReference type="GO" id="GO:0006707">
    <property type="term" value="P:cholesterol catabolic process"/>
    <property type="evidence" value="ECO:0000266"/>
    <property type="project" value="RGD"/>
</dbReference>
<dbReference type="GO" id="GO:0007586">
    <property type="term" value="P:digestion"/>
    <property type="evidence" value="ECO:0000266"/>
    <property type="project" value="RGD"/>
</dbReference>
<dbReference type="CDD" id="cd19109">
    <property type="entry name" value="AKR_AKR1D1-3"/>
    <property type="match status" value="1"/>
</dbReference>
<dbReference type="FunFam" id="3.20.20.100:FF:000003">
    <property type="entry name" value="Aldo-keto reductase family 1 member C3"/>
    <property type="match status" value="1"/>
</dbReference>
<dbReference type="Gene3D" id="3.20.20.100">
    <property type="entry name" value="NADP-dependent oxidoreductase domain"/>
    <property type="match status" value="1"/>
</dbReference>
<dbReference type="InterPro" id="IPR020471">
    <property type="entry name" value="AKR"/>
</dbReference>
<dbReference type="InterPro" id="IPR044483">
    <property type="entry name" value="AKR1D1"/>
</dbReference>
<dbReference type="InterPro" id="IPR018170">
    <property type="entry name" value="Aldo/ket_reductase_CS"/>
</dbReference>
<dbReference type="InterPro" id="IPR023210">
    <property type="entry name" value="NADP_OxRdtase_dom"/>
</dbReference>
<dbReference type="InterPro" id="IPR036812">
    <property type="entry name" value="NADP_OxRdtase_dom_sf"/>
</dbReference>
<dbReference type="PANTHER" id="PTHR11732">
    <property type="entry name" value="ALDO/KETO REDUCTASE"/>
    <property type="match status" value="1"/>
</dbReference>
<dbReference type="Pfam" id="PF00248">
    <property type="entry name" value="Aldo_ket_red"/>
    <property type="match status" value="1"/>
</dbReference>
<dbReference type="PIRSF" id="PIRSF000097">
    <property type="entry name" value="AKR"/>
    <property type="match status" value="1"/>
</dbReference>
<dbReference type="PRINTS" id="PR00069">
    <property type="entry name" value="ALDKETRDTASE"/>
</dbReference>
<dbReference type="SUPFAM" id="SSF51430">
    <property type="entry name" value="NAD(P)-linked oxidoreductase"/>
    <property type="match status" value="1"/>
</dbReference>
<dbReference type="PROSITE" id="PS00798">
    <property type="entry name" value="ALDOKETO_REDUCTASE_1"/>
    <property type="match status" value="1"/>
</dbReference>
<dbReference type="PROSITE" id="PS00062">
    <property type="entry name" value="ALDOKETO_REDUCTASE_2"/>
    <property type="match status" value="1"/>
</dbReference>
<dbReference type="PROSITE" id="PS00063">
    <property type="entry name" value="ALDOKETO_REDUCTASE_3"/>
    <property type="match status" value="1"/>
</dbReference>
<comment type="function">
    <text evidence="1">Catalyzes the stereospecific NADPH-dependent reduction of the C4-C5 double bond of bile acid intermediates and steroid hormones carrying a delta(4)-3-one structure to yield an A/B cis-ring junction. This cis-configuration is crucial for bile acid biosynthesis and plays important roles in steroid metabolism. Capable of reducing a broad range of delta-(4)-3-ketosteroids from C18 (such as, 17beta-hydroxyestr-4-en-3-one) to C27 (such as, 7alpha-hydroxycholest-4-en-3-one).</text>
</comment>
<comment type="catalytic activity">
    <reaction evidence="1">
        <text>5beta-cholestan-3-one + NADP(+) = cholest-4-en-3-one + NADPH + H(+)</text>
        <dbReference type="Rhea" id="RHEA:11524"/>
        <dbReference type="ChEBI" id="CHEBI:15378"/>
        <dbReference type="ChEBI" id="CHEBI:16074"/>
        <dbReference type="ChEBI" id="CHEBI:16175"/>
        <dbReference type="ChEBI" id="CHEBI:57783"/>
        <dbReference type="ChEBI" id="CHEBI:58349"/>
        <dbReference type="EC" id="1.3.1.3"/>
    </reaction>
    <physiologicalReaction direction="right-to-left" evidence="1">
        <dbReference type="Rhea" id="RHEA:11526"/>
    </physiologicalReaction>
</comment>
<comment type="catalytic activity">
    <reaction evidence="1">
        <text>4,5beta-dihydrocortisone + NADP(+) = cortisone + NADPH + H(+)</text>
        <dbReference type="Rhea" id="RHEA:14037"/>
        <dbReference type="ChEBI" id="CHEBI:15378"/>
        <dbReference type="ChEBI" id="CHEBI:16962"/>
        <dbReference type="ChEBI" id="CHEBI:18093"/>
        <dbReference type="ChEBI" id="CHEBI:57783"/>
        <dbReference type="ChEBI" id="CHEBI:58349"/>
        <dbReference type="EC" id="1.3.1.3"/>
    </reaction>
    <physiologicalReaction direction="right-to-left" evidence="1">
        <dbReference type="Rhea" id="RHEA:14039"/>
    </physiologicalReaction>
</comment>
<comment type="catalytic activity">
    <reaction evidence="1">
        <text>cortisol + NADPH + H(+) = 5beta-dihydrocortisol + NADP(+)</text>
        <dbReference type="Rhea" id="RHEA:46644"/>
        <dbReference type="ChEBI" id="CHEBI:732"/>
        <dbReference type="ChEBI" id="CHEBI:15378"/>
        <dbReference type="ChEBI" id="CHEBI:17650"/>
        <dbReference type="ChEBI" id="CHEBI:57783"/>
        <dbReference type="ChEBI" id="CHEBI:58349"/>
    </reaction>
    <physiologicalReaction direction="left-to-right" evidence="1">
        <dbReference type="Rhea" id="RHEA:46645"/>
    </physiologicalReaction>
</comment>
<comment type="catalytic activity">
    <reaction evidence="1">
        <text>corticosterone + NADPH + H(+) = 5beta-dihydrocorticosterone + NADP(+)</text>
        <dbReference type="Rhea" id="RHEA:46664"/>
        <dbReference type="ChEBI" id="CHEBI:15378"/>
        <dbReference type="ChEBI" id="CHEBI:16827"/>
        <dbReference type="ChEBI" id="CHEBI:57783"/>
        <dbReference type="ChEBI" id="CHEBI:58349"/>
        <dbReference type="ChEBI" id="CHEBI:86381"/>
    </reaction>
    <physiologicalReaction direction="left-to-right" evidence="1">
        <dbReference type="Rhea" id="RHEA:46665"/>
    </physiologicalReaction>
</comment>
<comment type="catalytic activity">
    <reaction evidence="1">
        <text>7alpha,12alpha-dihydroxycholest-4-en-3-one + NADPH + H(+) = 7alpha,12alpha-dihydroxy-5beta-cholestan-3-one + NADP(+)</text>
        <dbReference type="Rhea" id="RHEA:46632"/>
        <dbReference type="ChEBI" id="CHEBI:2288"/>
        <dbReference type="ChEBI" id="CHEBI:15378"/>
        <dbReference type="ChEBI" id="CHEBI:28477"/>
        <dbReference type="ChEBI" id="CHEBI:57783"/>
        <dbReference type="ChEBI" id="CHEBI:58349"/>
    </reaction>
    <physiologicalReaction direction="left-to-right" evidence="1">
        <dbReference type="Rhea" id="RHEA:46633"/>
    </physiologicalReaction>
</comment>
<comment type="catalytic activity">
    <reaction evidence="1">
        <text>7alpha-hydroxycholest-4-en-3-one + NADPH + H(+) = 7alpha-hydroxy-5beta-cholestan-3-one + NADP(+)</text>
        <dbReference type="Rhea" id="RHEA:46640"/>
        <dbReference type="ChEBI" id="CHEBI:2290"/>
        <dbReference type="ChEBI" id="CHEBI:15378"/>
        <dbReference type="ChEBI" id="CHEBI:17899"/>
        <dbReference type="ChEBI" id="CHEBI:57783"/>
        <dbReference type="ChEBI" id="CHEBI:58349"/>
    </reaction>
    <physiologicalReaction direction="left-to-right" evidence="1">
        <dbReference type="Rhea" id="RHEA:46641"/>
    </physiologicalReaction>
</comment>
<comment type="catalytic activity">
    <reaction evidence="1">
        <text>epitestosterone + NADPH + H(+) = 5beta-dihydroepitestosterone + NADP(+)</text>
        <dbReference type="Rhea" id="RHEA:46652"/>
        <dbReference type="ChEBI" id="CHEBI:15378"/>
        <dbReference type="ChEBI" id="CHEBI:42534"/>
        <dbReference type="ChEBI" id="CHEBI:57783"/>
        <dbReference type="ChEBI" id="CHEBI:58349"/>
        <dbReference type="ChEBI" id="CHEBI:86377"/>
    </reaction>
    <physiologicalReaction direction="left-to-right" evidence="1">
        <dbReference type="Rhea" id="RHEA:46653"/>
    </physiologicalReaction>
</comment>
<comment type="catalytic activity">
    <reaction evidence="1">
        <text>androst-4-ene-3,17-dione + NADPH + H(+) = 5beta-androstane-3,17-dione + NADP(+)</text>
        <dbReference type="Rhea" id="RHEA:46656"/>
        <dbReference type="ChEBI" id="CHEBI:15378"/>
        <dbReference type="ChEBI" id="CHEBI:16422"/>
        <dbReference type="ChEBI" id="CHEBI:16985"/>
        <dbReference type="ChEBI" id="CHEBI:57783"/>
        <dbReference type="ChEBI" id="CHEBI:58349"/>
    </reaction>
    <physiologicalReaction direction="left-to-right" evidence="1">
        <dbReference type="Rhea" id="RHEA:46657"/>
    </physiologicalReaction>
</comment>
<comment type="catalytic activity">
    <reaction evidence="1">
        <text>progesterone + NADPH + H(+) = 5beta-pregnan-3,20-dione + NADP(+)</text>
        <dbReference type="Rhea" id="RHEA:46660"/>
        <dbReference type="ChEBI" id="CHEBI:15378"/>
        <dbReference type="ChEBI" id="CHEBI:17026"/>
        <dbReference type="ChEBI" id="CHEBI:30154"/>
        <dbReference type="ChEBI" id="CHEBI:57783"/>
        <dbReference type="ChEBI" id="CHEBI:58349"/>
    </reaction>
    <physiologicalReaction direction="left-to-right" evidence="1">
        <dbReference type="Rhea" id="RHEA:46661"/>
    </physiologicalReaction>
</comment>
<comment type="catalytic activity">
    <reaction evidence="1">
        <text>21-hydroxyprogesterone + NADPH + H(+) = 5beta-dihydrodeoxycorticosterone + NADP(+)</text>
        <dbReference type="Rhea" id="RHEA:46668"/>
        <dbReference type="ChEBI" id="CHEBI:15378"/>
        <dbReference type="ChEBI" id="CHEBI:16973"/>
        <dbReference type="ChEBI" id="CHEBI:57783"/>
        <dbReference type="ChEBI" id="CHEBI:58349"/>
        <dbReference type="ChEBI" id="CHEBI:86384"/>
    </reaction>
    <physiologicalReaction direction="left-to-right" evidence="1">
        <dbReference type="Rhea" id="RHEA:46669"/>
    </physiologicalReaction>
</comment>
<comment type="catalytic activity">
    <reaction evidence="1">
        <text>aldosterone + NADPH + H(+) = 5beta-dihydroaldosterone + NADP(+)</text>
        <dbReference type="Rhea" id="RHEA:46672"/>
        <dbReference type="ChEBI" id="CHEBI:15378"/>
        <dbReference type="ChEBI" id="CHEBI:27584"/>
        <dbReference type="ChEBI" id="CHEBI:57783"/>
        <dbReference type="ChEBI" id="CHEBI:58349"/>
        <dbReference type="ChEBI" id="CHEBI:86389"/>
    </reaction>
    <physiologicalReaction direction="left-to-right" evidence="1">
        <dbReference type="Rhea" id="RHEA:46673"/>
    </physiologicalReaction>
</comment>
<comment type="catalytic activity">
    <reaction evidence="1">
        <text>17beta-hydroxyandrosta-1,4-dien-3-one + NADPH + H(+) = 17beta-hydroxy-5beta-androst-1-en-3-one + NADP(+)</text>
        <dbReference type="Rhea" id="RHEA:47076"/>
        <dbReference type="ChEBI" id="CHEBI:15378"/>
        <dbReference type="ChEBI" id="CHEBI:34584"/>
        <dbReference type="ChEBI" id="CHEBI:57783"/>
        <dbReference type="ChEBI" id="CHEBI:58349"/>
        <dbReference type="ChEBI" id="CHEBI:87331"/>
    </reaction>
    <physiologicalReaction direction="left-to-right" evidence="1">
        <dbReference type="Rhea" id="RHEA:47077"/>
    </physiologicalReaction>
</comment>
<comment type="catalytic activity">
    <reaction evidence="1">
        <text>17beta-hydroxyestr-4-en-3-one + NADPH + H(+) = 17beta-hydroxy-5beta-estran-3-one + NADP(+)</text>
        <dbReference type="Rhea" id="RHEA:47080"/>
        <dbReference type="ChEBI" id="CHEBI:7466"/>
        <dbReference type="ChEBI" id="CHEBI:15378"/>
        <dbReference type="ChEBI" id="CHEBI:57783"/>
        <dbReference type="ChEBI" id="CHEBI:58349"/>
        <dbReference type="ChEBI" id="CHEBI:87333"/>
    </reaction>
    <physiologicalReaction direction="left-to-right" evidence="1">
        <dbReference type="Rhea" id="RHEA:47081"/>
    </physiologicalReaction>
</comment>
<comment type="catalytic activity">
    <reaction evidence="1">
        <text>5beta-dihydrotestosterone + NADP(+) = testosterone + NADPH + H(+)</text>
        <dbReference type="Rhea" id="RHEA:46636"/>
        <dbReference type="ChEBI" id="CHEBI:2150"/>
        <dbReference type="ChEBI" id="CHEBI:15378"/>
        <dbReference type="ChEBI" id="CHEBI:17347"/>
        <dbReference type="ChEBI" id="CHEBI:57783"/>
        <dbReference type="ChEBI" id="CHEBI:58349"/>
        <dbReference type="EC" id="1.3.1.3"/>
    </reaction>
    <physiologicalReaction direction="left-to-right" evidence="1">
        <dbReference type="Rhea" id="RHEA:46637"/>
    </physiologicalReaction>
</comment>
<comment type="catalytic activity">
    <reaction evidence="1">
        <text>androst-4-ene-3,11,17-trione + NADPH + H(+) = 17beta-hydroxyandrost-4-ene-3,11-dione + NADP(+)</text>
        <dbReference type="Rhea" id="RHEA:53484"/>
        <dbReference type="ChEBI" id="CHEBI:2495"/>
        <dbReference type="ChEBI" id="CHEBI:15378"/>
        <dbReference type="ChEBI" id="CHEBI:34133"/>
        <dbReference type="ChEBI" id="CHEBI:57783"/>
        <dbReference type="ChEBI" id="CHEBI:58349"/>
    </reaction>
    <physiologicalReaction direction="left-to-right" evidence="1">
        <dbReference type="Rhea" id="RHEA:53485"/>
    </physiologicalReaction>
</comment>
<comment type="activity regulation">
    <text evidence="1">Subject to inhibition by high substrate concentrations. Inhibited by testosterone concentrations above 10 uM. Inhibited by the primary and secondary bile acids chenodeoxycholic acid and ursodeoxycholic acid.</text>
</comment>
<comment type="subcellular location">
    <subcellularLocation>
        <location evidence="1">Cytoplasm</location>
    </subcellularLocation>
</comment>
<comment type="PTM">
    <text>The N-terminus is blocked.</text>
</comment>
<comment type="similarity">
    <text evidence="2">Belongs to the aldo/keto reductase family.</text>
</comment>
<sequence length="326" mass="37378">MNLSTANHHIPLNDGNSIPIIGLGTYSDPRPVPGKTFIAVKTAIDEGYRHIDGAYVYRNEHEVGEAIREKVAEGKVKREEIFYCGKLWSTDHDPEMVRPALERTLQTLKLDYIDLYIIEMPMAFKPGEEFYPKDENGRVIYHKSNLCATWEALEACKDAGLVKSLGVSNFNRRQLEVILNKPGLKYKPVTNQVECHPYFTQTKLLEVSASSMTSFIVAYSPLGTCRNPLWVNVSSPPLLKDELLTSLGKKYNKTQAQIVLRFDIQRGLVVIPKSTTPERIKENFQIFDFSLTKEEMKDIEALNKNVRFVEMLMWSDHPEYPFHDEY</sequence>
<name>AK1D1_RAT</name>
<gene>
    <name type="primary">Akr1d1</name>
</gene>
<organism>
    <name type="scientific">Rattus norvegicus</name>
    <name type="common">Rat</name>
    <dbReference type="NCBI Taxonomy" id="10116"/>
    <lineage>
        <taxon>Eukaryota</taxon>
        <taxon>Metazoa</taxon>
        <taxon>Chordata</taxon>
        <taxon>Craniata</taxon>
        <taxon>Vertebrata</taxon>
        <taxon>Euteleostomi</taxon>
        <taxon>Mammalia</taxon>
        <taxon>Eutheria</taxon>
        <taxon>Euarchontoglires</taxon>
        <taxon>Glires</taxon>
        <taxon>Rodentia</taxon>
        <taxon>Myomorpha</taxon>
        <taxon>Muroidea</taxon>
        <taxon>Muridae</taxon>
        <taxon>Murinae</taxon>
        <taxon>Rattus</taxon>
    </lineage>
</organism>
<feature type="chain" id="PRO_0000124672" description="Aldo-keto reductase family 1 member D1">
    <location>
        <begin position="1"/>
        <end position="326"/>
    </location>
</feature>
<feature type="active site" description="Proton donor" evidence="1">
    <location>
        <position position="57"/>
    </location>
</feature>
<feature type="binding site" evidence="1">
    <location>
        <begin position="22"/>
        <end position="26"/>
    </location>
    <ligand>
        <name>NADP(+)</name>
        <dbReference type="ChEBI" id="CHEBI:58349"/>
    </ligand>
</feature>
<feature type="binding site" evidence="1">
    <location>
        <position position="26"/>
    </location>
    <ligand>
        <name>substrate</name>
    </ligand>
</feature>
<feature type="binding site" evidence="1">
    <location>
        <position position="52"/>
    </location>
    <ligand>
        <name>NADP(+)</name>
        <dbReference type="ChEBI" id="CHEBI:58349"/>
    </ligand>
</feature>
<feature type="binding site" evidence="1">
    <location>
        <position position="57"/>
    </location>
    <ligand>
        <name>substrate</name>
    </ligand>
</feature>
<feature type="binding site" evidence="1">
    <location>
        <position position="88"/>
    </location>
    <ligand>
        <name>substrate</name>
    </ligand>
</feature>
<feature type="binding site" evidence="1">
    <location>
        <position position="119"/>
    </location>
    <ligand>
        <name>substrate</name>
    </ligand>
</feature>
<feature type="binding site" evidence="1">
    <location>
        <position position="131"/>
    </location>
    <ligand>
        <name>substrate</name>
    </ligand>
</feature>
<feature type="binding site" evidence="1">
    <location>
        <begin position="168"/>
        <end position="169"/>
    </location>
    <ligand>
        <name>NADP(+)</name>
        <dbReference type="ChEBI" id="CHEBI:58349"/>
    </ligand>
</feature>
<feature type="binding site" evidence="1">
    <location>
        <position position="192"/>
    </location>
    <ligand>
        <name>NADP(+)</name>
        <dbReference type="ChEBI" id="CHEBI:58349"/>
    </ligand>
</feature>
<feature type="binding site" evidence="1">
    <location>
        <begin position="219"/>
        <end position="224"/>
    </location>
    <ligand>
        <name>NADP(+)</name>
        <dbReference type="ChEBI" id="CHEBI:58349"/>
    </ligand>
</feature>
<feature type="binding site" evidence="1">
    <location>
        <position position="230"/>
    </location>
    <ligand>
        <name>substrate</name>
    </ligand>
</feature>
<feature type="binding site" evidence="1">
    <location>
        <begin position="273"/>
        <end position="283"/>
    </location>
    <ligand>
        <name>NADP(+)</name>
        <dbReference type="ChEBI" id="CHEBI:58349"/>
    </ligand>
</feature>
<proteinExistence type="evidence at protein level"/>
<reference key="1">
    <citation type="journal article" date="1991" name="FEBS Lett.">
        <title>Molecular cloning and sequence analysis of cDNA encoding delta 4-3-ketosteroid 5 beta-reductase of rat liver.</title>
        <authorList>
            <person name="Onishi Y."/>
            <person name="Noshiro M."/>
            <person name="Shimosato T."/>
            <person name="Okuda K."/>
        </authorList>
    </citation>
    <scope>NUCLEOTIDE SEQUENCE [MRNA]</scope>
    <source>
        <tissue>Liver</tissue>
    </source>
</reference>
<reference key="2">
    <citation type="journal article" date="1991" name="Biol. Chem. Hoppe-Seyler">
        <title>Delta 4-3-Oxosteroid 5 beta-reductase. Structure and function.</title>
        <authorList>
            <person name="Onishi Y."/>
            <person name="Noshiro M."/>
            <person name="Shimosato T."/>
            <person name="Okuda K."/>
        </authorList>
    </citation>
    <scope>NUCLEOTIDE SEQUENCE [MRNA]</scope>
    <scope>PARTIAL PROTEIN SEQUENCE</scope>
    <source>
        <tissue>Liver</tissue>
    </source>
</reference>
<reference key="3">
    <citation type="journal article" date="1996" name="Hepatology">
        <title>Identification of the 37-kd rat liver protein that forms an acetaldehyde adduct in vivo as delta 4-3-ketosteroid 5 beta-reductase.</title>
        <authorList>
            <person name="Zhu Y."/>
            <person name="Fillenwarth M.J."/>
            <person name="Crabb D."/>
            <person name="Lumeng L."/>
            <person name="Lin R.C."/>
        </authorList>
    </citation>
    <scope>NUCLEOTIDE SEQUENCE [MRNA]</scope>
    <source>
        <tissue>Liver</tissue>
    </source>
</reference>
<accession>P31210</accession>
<keyword id="KW-0088">Bile acid catabolism</keyword>
<keyword id="KW-0963">Cytoplasm</keyword>
<keyword id="KW-0903">Direct protein sequencing</keyword>
<keyword id="KW-0442">Lipid degradation</keyword>
<keyword id="KW-0443">Lipid metabolism</keyword>
<keyword id="KW-0521">NADP</keyword>
<keyword id="KW-0560">Oxidoreductase</keyword>
<keyword id="KW-1185">Reference proteome</keyword>
<keyword id="KW-0753">Steroid metabolism</keyword>
<evidence type="ECO:0000250" key="1">
    <source>
        <dbReference type="UniProtKB" id="P51857"/>
    </source>
</evidence>
<evidence type="ECO:0000305" key="2"/>